<keyword id="KW-0031">Aminopeptidase</keyword>
<keyword id="KW-0378">Hydrolase</keyword>
<keyword id="KW-0479">Metal-binding</keyword>
<keyword id="KW-0645">Protease</keyword>
<keyword id="KW-1185">Reference proteome</keyword>
<gene>
    <name evidence="1" type="primary">map</name>
    <name type="ordered locus">TP_0842</name>
</gene>
<protein>
    <recommendedName>
        <fullName evidence="1">Methionine aminopeptidase</fullName>
        <shortName evidence="1">MAP</shortName>
        <shortName evidence="1">MetAP</shortName>
        <ecNumber evidence="1">3.4.11.18</ecNumber>
    </recommendedName>
    <alternativeName>
        <fullName evidence="1">Peptidase M</fullName>
    </alternativeName>
</protein>
<dbReference type="EC" id="3.4.11.18" evidence="1"/>
<dbReference type="EMBL" id="AE000520">
    <property type="protein sequence ID" value="AAC65810.1"/>
    <property type="molecule type" value="Genomic_DNA"/>
</dbReference>
<dbReference type="PIR" id="B71273">
    <property type="entry name" value="B71273"/>
</dbReference>
<dbReference type="RefSeq" id="WP_010882286.1">
    <property type="nucleotide sequence ID" value="NC_021490.2"/>
</dbReference>
<dbReference type="SMR" id="O83814"/>
<dbReference type="IntAct" id="O83814">
    <property type="interactions" value="7"/>
</dbReference>
<dbReference type="STRING" id="243276.TP_0842"/>
<dbReference type="EnsemblBacteria" id="AAC65810">
    <property type="protein sequence ID" value="AAC65810"/>
    <property type="gene ID" value="TP_0842"/>
</dbReference>
<dbReference type="GeneID" id="93876600"/>
<dbReference type="KEGG" id="tpa:TP_0842"/>
<dbReference type="KEGG" id="tpw:TPANIC_0842"/>
<dbReference type="eggNOG" id="COG0024">
    <property type="taxonomic scope" value="Bacteria"/>
</dbReference>
<dbReference type="HOGENOM" id="CLU_015857_0_1_12"/>
<dbReference type="OrthoDB" id="9802055at2"/>
<dbReference type="Proteomes" id="UP000000811">
    <property type="component" value="Chromosome"/>
</dbReference>
<dbReference type="GO" id="GO:0005829">
    <property type="term" value="C:cytosol"/>
    <property type="evidence" value="ECO:0007669"/>
    <property type="project" value="TreeGrafter"/>
</dbReference>
<dbReference type="GO" id="GO:0004239">
    <property type="term" value="F:initiator methionyl aminopeptidase activity"/>
    <property type="evidence" value="ECO:0007669"/>
    <property type="project" value="UniProtKB-UniRule"/>
</dbReference>
<dbReference type="GO" id="GO:0046872">
    <property type="term" value="F:metal ion binding"/>
    <property type="evidence" value="ECO:0007669"/>
    <property type="project" value="UniProtKB-UniRule"/>
</dbReference>
<dbReference type="GO" id="GO:0070006">
    <property type="term" value="F:metalloaminopeptidase activity"/>
    <property type="evidence" value="ECO:0007669"/>
    <property type="project" value="UniProtKB-UniRule"/>
</dbReference>
<dbReference type="GO" id="GO:0006508">
    <property type="term" value="P:proteolysis"/>
    <property type="evidence" value="ECO:0007669"/>
    <property type="project" value="UniProtKB-KW"/>
</dbReference>
<dbReference type="CDD" id="cd01086">
    <property type="entry name" value="MetAP1"/>
    <property type="match status" value="1"/>
</dbReference>
<dbReference type="Gene3D" id="3.90.230.10">
    <property type="entry name" value="Creatinase/methionine aminopeptidase superfamily"/>
    <property type="match status" value="1"/>
</dbReference>
<dbReference type="HAMAP" id="MF_01974">
    <property type="entry name" value="MetAP_1"/>
    <property type="match status" value="1"/>
</dbReference>
<dbReference type="InterPro" id="IPR036005">
    <property type="entry name" value="Creatinase/aminopeptidase-like"/>
</dbReference>
<dbReference type="InterPro" id="IPR000994">
    <property type="entry name" value="Pept_M24"/>
</dbReference>
<dbReference type="InterPro" id="IPR001714">
    <property type="entry name" value="Pept_M24_MAP"/>
</dbReference>
<dbReference type="InterPro" id="IPR002467">
    <property type="entry name" value="Pept_M24A_MAP1"/>
</dbReference>
<dbReference type="NCBIfam" id="TIGR00500">
    <property type="entry name" value="met_pdase_I"/>
    <property type="match status" value="1"/>
</dbReference>
<dbReference type="PANTHER" id="PTHR43330">
    <property type="entry name" value="METHIONINE AMINOPEPTIDASE"/>
    <property type="match status" value="1"/>
</dbReference>
<dbReference type="PANTHER" id="PTHR43330:SF27">
    <property type="entry name" value="METHIONINE AMINOPEPTIDASE"/>
    <property type="match status" value="1"/>
</dbReference>
<dbReference type="Pfam" id="PF00557">
    <property type="entry name" value="Peptidase_M24"/>
    <property type="match status" value="1"/>
</dbReference>
<dbReference type="PRINTS" id="PR00599">
    <property type="entry name" value="MAPEPTIDASE"/>
</dbReference>
<dbReference type="SUPFAM" id="SSF55920">
    <property type="entry name" value="Creatinase/aminopeptidase"/>
    <property type="match status" value="1"/>
</dbReference>
<dbReference type="PROSITE" id="PS00680">
    <property type="entry name" value="MAP_1"/>
    <property type="match status" value="1"/>
</dbReference>
<name>MAP1_TREPA</name>
<proteinExistence type="inferred from homology"/>
<comment type="function">
    <text evidence="1">Removes the N-terminal methionine from nascent proteins. The N-terminal methionine is often cleaved when the second residue in the primary sequence is small and uncharged (Met-Ala-, Cys, Gly, Pro, Ser, Thr, or Val). Requires deformylation of the N(alpha)-formylated initiator methionine before it can be hydrolyzed.</text>
</comment>
<comment type="catalytic activity">
    <reaction evidence="1">
        <text>Release of N-terminal amino acids, preferentially methionine, from peptides and arylamides.</text>
        <dbReference type="EC" id="3.4.11.18"/>
    </reaction>
</comment>
<comment type="cofactor">
    <cofactor evidence="1">
        <name>Co(2+)</name>
        <dbReference type="ChEBI" id="CHEBI:48828"/>
    </cofactor>
    <cofactor evidence="1">
        <name>Zn(2+)</name>
        <dbReference type="ChEBI" id="CHEBI:29105"/>
    </cofactor>
    <cofactor evidence="1">
        <name>Mn(2+)</name>
        <dbReference type="ChEBI" id="CHEBI:29035"/>
    </cofactor>
    <cofactor evidence="1">
        <name>Fe(2+)</name>
        <dbReference type="ChEBI" id="CHEBI:29033"/>
    </cofactor>
    <text evidence="1">Binds 2 divalent metal cations per subunit. Has a high-affinity and a low affinity metal-binding site. The true nature of the physiological cofactor is under debate. The enzyme is active with cobalt, zinc, manganese or divalent iron ions. Most likely, methionine aminopeptidases function as mononuclear Fe(2+)-metalloproteases under physiological conditions, and the catalytically relevant metal-binding site has been assigned to the histidine-containing high-affinity site.</text>
</comment>
<comment type="subunit">
    <text evidence="1">Monomer.</text>
</comment>
<comment type="similarity">
    <text evidence="1">Belongs to the peptidase M24A family. Methionine aminopeptidase type 1 subfamily.</text>
</comment>
<reference key="1">
    <citation type="journal article" date="1998" name="Science">
        <title>Complete genome sequence of Treponema pallidum, the syphilis spirochete.</title>
        <authorList>
            <person name="Fraser C.M."/>
            <person name="Norris S.J."/>
            <person name="Weinstock G.M."/>
            <person name="White O."/>
            <person name="Sutton G.G."/>
            <person name="Dodson R.J."/>
            <person name="Gwinn M.L."/>
            <person name="Hickey E.K."/>
            <person name="Clayton R.A."/>
            <person name="Ketchum K.A."/>
            <person name="Sodergren E."/>
            <person name="Hardham J.M."/>
            <person name="McLeod M.P."/>
            <person name="Salzberg S.L."/>
            <person name="Peterson J.D."/>
            <person name="Khalak H.G."/>
            <person name="Richardson D.L."/>
            <person name="Howell J.K."/>
            <person name="Chidambaram M."/>
            <person name="Utterback T.R."/>
            <person name="McDonald L.A."/>
            <person name="Artiach P."/>
            <person name="Bowman C."/>
            <person name="Cotton M.D."/>
            <person name="Fujii C."/>
            <person name="Garland S.A."/>
            <person name="Hatch B."/>
            <person name="Horst K."/>
            <person name="Roberts K.M."/>
            <person name="Sandusky M."/>
            <person name="Weidman J.F."/>
            <person name="Smith H.O."/>
            <person name="Venter J.C."/>
        </authorList>
    </citation>
    <scope>NUCLEOTIDE SEQUENCE [LARGE SCALE GENOMIC DNA]</scope>
    <source>
        <strain>Nichols</strain>
    </source>
</reference>
<sequence>MIRIKTPEQIDGIRASCKALARLFDVLIPLVKPGVQTQELDAFCQRFIRSVGGVPAWFSEGFPAAACISINEEVIHGLPSARVIQDGDLVSLDVGINLNGYISDACRTVPVGGVAHERLELLRVTTECLRAGIKACRAGARVRAVSRAVYAVAARHRFGVVYEYCGHGVGLAVHEEPNIPNVPGLEGPNPRFLPGMVVAIEPMLTLGTDEVRTSADGWTVVTADGSCACHVEHTVAVFADHTEVLTEPTEVERTG</sequence>
<feature type="chain" id="PRO_0000148966" description="Methionine aminopeptidase">
    <location>
        <begin position="1"/>
        <end position="255"/>
    </location>
</feature>
<feature type="binding site" evidence="1">
    <location>
        <position position="76"/>
    </location>
    <ligand>
        <name>substrate</name>
    </ligand>
</feature>
<feature type="binding site" evidence="1">
    <location>
        <position position="93"/>
    </location>
    <ligand>
        <name>a divalent metal cation</name>
        <dbReference type="ChEBI" id="CHEBI:60240"/>
        <label>1</label>
    </ligand>
</feature>
<feature type="binding site" evidence="1">
    <location>
        <position position="104"/>
    </location>
    <ligand>
        <name>a divalent metal cation</name>
        <dbReference type="ChEBI" id="CHEBI:60240"/>
        <label>1</label>
    </ligand>
</feature>
<feature type="binding site" evidence="1">
    <location>
        <position position="104"/>
    </location>
    <ligand>
        <name>a divalent metal cation</name>
        <dbReference type="ChEBI" id="CHEBI:60240"/>
        <label>2</label>
        <note>catalytic</note>
    </ligand>
</feature>
<feature type="binding site" evidence="1">
    <location>
        <position position="167"/>
    </location>
    <ligand>
        <name>a divalent metal cation</name>
        <dbReference type="ChEBI" id="CHEBI:60240"/>
        <label>2</label>
        <note>catalytic</note>
    </ligand>
</feature>
<feature type="binding site" evidence="1">
    <location>
        <position position="174"/>
    </location>
    <ligand>
        <name>substrate</name>
    </ligand>
</feature>
<feature type="binding site" evidence="1">
    <location>
        <position position="201"/>
    </location>
    <ligand>
        <name>a divalent metal cation</name>
        <dbReference type="ChEBI" id="CHEBI:60240"/>
        <label>2</label>
        <note>catalytic</note>
    </ligand>
</feature>
<feature type="binding site" evidence="1">
    <location>
        <position position="232"/>
    </location>
    <ligand>
        <name>a divalent metal cation</name>
        <dbReference type="ChEBI" id="CHEBI:60240"/>
        <label>1</label>
    </ligand>
</feature>
<feature type="binding site" evidence="1">
    <location>
        <position position="232"/>
    </location>
    <ligand>
        <name>a divalent metal cation</name>
        <dbReference type="ChEBI" id="CHEBI:60240"/>
        <label>2</label>
        <note>catalytic</note>
    </ligand>
</feature>
<organism>
    <name type="scientific">Treponema pallidum (strain Nichols)</name>
    <dbReference type="NCBI Taxonomy" id="243276"/>
    <lineage>
        <taxon>Bacteria</taxon>
        <taxon>Pseudomonadati</taxon>
        <taxon>Spirochaetota</taxon>
        <taxon>Spirochaetia</taxon>
        <taxon>Spirochaetales</taxon>
        <taxon>Treponemataceae</taxon>
        <taxon>Treponema</taxon>
    </lineage>
</organism>
<evidence type="ECO:0000255" key="1">
    <source>
        <dbReference type="HAMAP-Rule" id="MF_01974"/>
    </source>
</evidence>
<accession>O83814</accession>